<organism>
    <name type="scientific">Rhodopseudomonas palustris (strain TIE-1)</name>
    <dbReference type="NCBI Taxonomy" id="395960"/>
    <lineage>
        <taxon>Bacteria</taxon>
        <taxon>Pseudomonadati</taxon>
        <taxon>Pseudomonadota</taxon>
        <taxon>Alphaproteobacteria</taxon>
        <taxon>Hyphomicrobiales</taxon>
        <taxon>Nitrobacteraceae</taxon>
        <taxon>Rhodopseudomonas</taxon>
    </lineage>
</organism>
<gene>
    <name evidence="1" type="primary">rplQ</name>
    <name type="ordered locus">Rpal_3641</name>
</gene>
<keyword id="KW-0687">Ribonucleoprotein</keyword>
<keyword id="KW-0689">Ribosomal protein</keyword>
<proteinExistence type="inferred from homology"/>
<dbReference type="EMBL" id="CP001096">
    <property type="protein sequence ID" value="ACF02141.1"/>
    <property type="molecule type" value="Genomic_DNA"/>
</dbReference>
<dbReference type="RefSeq" id="WP_011158770.1">
    <property type="nucleotide sequence ID" value="NC_011004.1"/>
</dbReference>
<dbReference type="SMR" id="B3QB18"/>
<dbReference type="GeneID" id="66894311"/>
<dbReference type="KEGG" id="rpt:Rpal_3641"/>
<dbReference type="HOGENOM" id="CLU_074407_2_0_5"/>
<dbReference type="OrthoDB" id="9809073at2"/>
<dbReference type="Proteomes" id="UP000001725">
    <property type="component" value="Chromosome"/>
</dbReference>
<dbReference type="GO" id="GO:0022625">
    <property type="term" value="C:cytosolic large ribosomal subunit"/>
    <property type="evidence" value="ECO:0007669"/>
    <property type="project" value="TreeGrafter"/>
</dbReference>
<dbReference type="GO" id="GO:0003735">
    <property type="term" value="F:structural constituent of ribosome"/>
    <property type="evidence" value="ECO:0007669"/>
    <property type="project" value="InterPro"/>
</dbReference>
<dbReference type="GO" id="GO:0006412">
    <property type="term" value="P:translation"/>
    <property type="evidence" value="ECO:0007669"/>
    <property type="project" value="UniProtKB-UniRule"/>
</dbReference>
<dbReference type="FunFam" id="3.90.1030.10:FF:000001">
    <property type="entry name" value="50S ribosomal protein L17"/>
    <property type="match status" value="1"/>
</dbReference>
<dbReference type="Gene3D" id="3.90.1030.10">
    <property type="entry name" value="Ribosomal protein L17"/>
    <property type="match status" value="1"/>
</dbReference>
<dbReference type="HAMAP" id="MF_01368">
    <property type="entry name" value="Ribosomal_bL17"/>
    <property type="match status" value="1"/>
</dbReference>
<dbReference type="InterPro" id="IPR000456">
    <property type="entry name" value="Ribosomal_bL17"/>
</dbReference>
<dbReference type="InterPro" id="IPR047859">
    <property type="entry name" value="Ribosomal_bL17_CS"/>
</dbReference>
<dbReference type="InterPro" id="IPR036373">
    <property type="entry name" value="Ribosomal_bL17_sf"/>
</dbReference>
<dbReference type="NCBIfam" id="TIGR00059">
    <property type="entry name" value="L17"/>
    <property type="match status" value="1"/>
</dbReference>
<dbReference type="PANTHER" id="PTHR14413:SF16">
    <property type="entry name" value="LARGE RIBOSOMAL SUBUNIT PROTEIN BL17M"/>
    <property type="match status" value="1"/>
</dbReference>
<dbReference type="PANTHER" id="PTHR14413">
    <property type="entry name" value="RIBOSOMAL PROTEIN L17"/>
    <property type="match status" value="1"/>
</dbReference>
<dbReference type="Pfam" id="PF01196">
    <property type="entry name" value="Ribosomal_L17"/>
    <property type="match status" value="1"/>
</dbReference>
<dbReference type="SUPFAM" id="SSF64263">
    <property type="entry name" value="Prokaryotic ribosomal protein L17"/>
    <property type="match status" value="1"/>
</dbReference>
<dbReference type="PROSITE" id="PS01167">
    <property type="entry name" value="RIBOSOMAL_L17"/>
    <property type="match status" value="1"/>
</dbReference>
<accession>B3QB18</accession>
<sequence length="139" mass="15675">MKHGKVHRKLNRTAEHRKAMFANMCAALIKHEQIVTTLPKAKELRPIVEKLVTLGKKGGLDKRRQAIAEMRDIEQVKKLFDVLAPRYKDRNGGYTRIIKAGFRYGDNAAMAVIEFVDRDEDAKGRDSGPTQDNSEAEAA</sequence>
<feature type="chain" id="PRO_1000144474" description="Large ribosomal subunit protein bL17">
    <location>
        <begin position="1"/>
        <end position="139"/>
    </location>
</feature>
<feature type="region of interest" description="Disordered" evidence="2">
    <location>
        <begin position="120"/>
        <end position="139"/>
    </location>
</feature>
<protein>
    <recommendedName>
        <fullName evidence="1">Large ribosomal subunit protein bL17</fullName>
    </recommendedName>
    <alternativeName>
        <fullName evidence="3">50S ribosomal protein L17</fullName>
    </alternativeName>
</protein>
<evidence type="ECO:0000255" key="1">
    <source>
        <dbReference type="HAMAP-Rule" id="MF_01368"/>
    </source>
</evidence>
<evidence type="ECO:0000256" key="2">
    <source>
        <dbReference type="SAM" id="MobiDB-lite"/>
    </source>
</evidence>
<evidence type="ECO:0000305" key="3"/>
<comment type="subunit">
    <text evidence="1">Part of the 50S ribosomal subunit. Contacts protein L32.</text>
</comment>
<comment type="similarity">
    <text evidence="1">Belongs to the bacterial ribosomal protein bL17 family.</text>
</comment>
<reference key="1">
    <citation type="submission" date="2008-05" db="EMBL/GenBank/DDBJ databases">
        <title>Complete sequence of Rhodopseudomonas palustris TIE-1.</title>
        <authorList>
            <consortium name="US DOE Joint Genome Institute"/>
            <person name="Lucas S."/>
            <person name="Copeland A."/>
            <person name="Lapidus A."/>
            <person name="Glavina del Rio T."/>
            <person name="Dalin E."/>
            <person name="Tice H."/>
            <person name="Pitluck S."/>
            <person name="Chain P."/>
            <person name="Malfatti S."/>
            <person name="Shin M."/>
            <person name="Vergez L."/>
            <person name="Lang D."/>
            <person name="Schmutz J."/>
            <person name="Larimer F."/>
            <person name="Land M."/>
            <person name="Hauser L."/>
            <person name="Kyrpides N."/>
            <person name="Mikhailova N."/>
            <person name="Emerson D."/>
            <person name="Newman D.K."/>
            <person name="Roden E."/>
            <person name="Richardson P."/>
        </authorList>
    </citation>
    <scope>NUCLEOTIDE SEQUENCE [LARGE SCALE GENOMIC DNA]</scope>
    <source>
        <strain>TIE-1</strain>
    </source>
</reference>
<name>RL17_RHOPT</name>